<feature type="chain" id="PRO_0000170624" description="Guanylate kinase">
    <location>
        <begin position="1"/>
        <end position="211"/>
    </location>
</feature>
<feature type="domain" description="Guanylate kinase-like" evidence="1">
    <location>
        <begin position="7"/>
        <end position="185"/>
    </location>
</feature>
<feature type="binding site" evidence="1">
    <location>
        <begin position="14"/>
        <end position="21"/>
    </location>
    <ligand>
        <name>ATP</name>
        <dbReference type="ChEBI" id="CHEBI:30616"/>
    </ligand>
</feature>
<organism>
    <name type="scientific">Symbiobacterium thermophilum (strain DSM 24528 / JCM 14929 / IAM 14863 / T)</name>
    <dbReference type="NCBI Taxonomy" id="292459"/>
    <lineage>
        <taxon>Bacteria</taxon>
        <taxon>Bacillati</taxon>
        <taxon>Bacillota</taxon>
        <taxon>Clostridia</taxon>
        <taxon>Eubacteriales</taxon>
        <taxon>Symbiobacteriaceae</taxon>
        <taxon>Symbiobacterium</taxon>
    </lineage>
</organism>
<comment type="function">
    <text evidence="1">Essential for recycling GMP and indirectly, cGMP.</text>
</comment>
<comment type="catalytic activity">
    <reaction evidence="1">
        <text>GMP + ATP = GDP + ADP</text>
        <dbReference type="Rhea" id="RHEA:20780"/>
        <dbReference type="ChEBI" id="CHEBI:30616"/>
        <dbReference type="ChEBI" id="CHEBI:58115"/>
        <dbReference type="ChEBI" id="CHEBI:58189"/>
        <dbReference type="ChEBI" id="CHEBI:456216"/>
        <dbReference type="EC" id="2.7.4.8"/>
    </reaction>
</comment>
<comment type="subcellular location">
    <subcellularLocation>
        <location evidence="1">Cytoplasm</location>
    </subcellularLocation>
</comment>
<comment type="similarity">
    <text evidence="1">Belongs to the guanylate kinase family.</text>
</comment>
<name>KGUA_SYMTH</name>
<dbReference type="EC" id="2.7.4.8" evidence="1"/>
<dbReference type="EMBL" id="AP006840">
    <property type="protein sequence ID" value="BAD40324.1"/>
    <property type="molecule type" value="Genomic_DNA"/>
</dbReference>
<dbReference type="RefSeq" id="WP_011195470.1">
    <property type="nucleotide sequence ID" value="NC_006177.1"/>
</dbReference>
<dbReference type="SMR" id="Q67PR9"/>
<dbReference type="STRING" id="292459.STH1339"/>
<dbReference type="KEGG" id="sth:STH1339"/>
<dbReference type="eggNOG" id="COG0194">
    <property type="taxonomic scope" value="Bacteria"/>
</dbReference>
<dbReference type="HOGENOM" id="CLU_001715_1_2_9"/>
<dbReference type="OrthoDB" id="9808150at2"/>
<dbReference type="Proteomes" id="UP000000417">
    <property type="component" value="Chromosome"/>
</dbReference>
<dbReference type="GO" id="GO:0005829">
    <property type="term" value="C:cytosol"/>
    <property type="evidence" value="ECO:0007669"/>
    <property type="project" value="TreeGrafter"/>
</dbReference>
<dbReference type="GO" id="GO:0005524">
    <property type="term" value="F:ATP binding"/>
    <property type="evidence" value="ECO:0007669"/>
    <property type="project" value="UniProtKB-UniRule"/>
</dbReference>
<dbReference type="GO" id="GO:0004385">
    <property type="term" value="F:guanylate kinase activity"/>
    <property type="evidence" value="ECO:0007669"/>
    <property type="project" value="UniProtKB-UniRule"/>
</dbReference>
<dbReference type="CDD" id="cd00071">
    <property type="entry name" value="GMPK"/>
    <property type="match status" value="1"/>
</dbReference>
<dbReference type="FunFam" id="3.30.63.10:FF:000002">
    <property type="entry name" value="Guanylate kinase 1"/>
    <property type="match status" value="1"/>
</dbReference>
<dbReference type="Gene3D" id="3.30.63.10">
    <property type="entry name" value="Guanylate Kinase phosphate binding domain"/>
    <property type="match status" value="1"/>
</dbReference>
<dbReference type="Gene3D" id="3.40.50.300">
    <property type="entry name" value="P-loop containing nucleotide triphosphate hydrolases"/>
    <property type="match status" value="1"/>
</dbReference>
<dbReference type="HAMAP" id="MF_00328">
    <property type="entry name" value="Guanylate_kinase"/>
    <property type="match status" value="1"/>
</dbReference>
<dbReference type="InterPro" id="IPR008145">
    <property type="entry name" value="GK/Ca_channel_bsu"/>
</dbReference>
<dbReference type="InterPro" id="IPR008144">
    <property type="entry name" value="Guanylate_kin-like_dom"/>
</dbReference>
<dbReference type="InterPro" id="IPR017665">
    <property type="entry name" value="Guanylate_kinase"/>
</dbReference>
<dbReference type="InterPro" id="IPR020590">
    <property type="entry name" value="Guanylate_kinase_CS"/>
</dbReference>
<dbReference type="InterPro" id="IPR027417">
    <property type="entry name" value="P-loop_NTPase"/>
</dbReference>
<dbReference type="NCBIfam" id="TIGR03263">
    <property type="entry name" value="guanyl_kin"/>
    <property type="match status" value="1"/>
</dbReference>
<dbReference type="PANTHER" id="PTHR23117:SF13">
    <property type="entry name" value="GUANYLATE KINASE"/>
    <property type="match status" value="1"/>
</dbReference>
<dbReference type="PANTHER" id="PTHR23117">
    <property type="entry name" value="GUANYLATE KINASE-RELATED"/>
    <property type="match status" value="1"/>
</dbReference>
<dbReference type="Pfam" id="PF00625">
    <property type="entry name" value="Guanylate_kin"/>
    <property type="match status" value="1"/>
</dbReference>
<dbReference type="SMART" id="SM00072">
    <property type="entry name" value="GuKc"/>
    <property type="match status" value="1"/>
</dbReference>
<dbReference type="SUPFAM" id="SSF52540">
    <property type="entry name" value="P-loop containing nucleoside triphosphate hydrolases"/>
    <property type="match status" value="1"/>
</dbReference>
<dbReference type="PROSITE" id="PS00856">
    <property type="entry name" value="GUANYLATE_KINASE_1"/>
    <property type="match status" value="1"/>
</dbReference>
<dbReference type="PROSITE" id="PS50052">
    <property type="entry name" value="GUANYLATE_KINASE_2"/>
    <property type="match status" value="1"/>
</dbReference>
<keyword id="KW-0067">ATP-binding</keyword>
<keyword id="KW-0963">Cytoplasm</keyword>
<keyword id="KW-0418">Kinase</keyword>
<keyword id="KW-0547">Nucleotide-binding</keyword>
<keyword id="KW-1185">Reference proteome</keyword>
<keyword id="KW-0808">Transferase</keyword>
<sequence length="211" mass="23261">MPNKPKGLLIVVTGPSAVGKGTICRALLAETPGIRFSVSCTTRPKRPGEVDGVEYYFISKEEFERRIAAGEFLEWAEVYGNYYGTPRGYVEEVTAQGQDVILDIDRVGARAVREQYPDAVSVFVIPPSMEALRQRIAARGTESPEAVARRLAEAPEWIREGLTYDYVIVNDDLARAVAELRAIIMAEKARTVRNGAALIETLLEKGALTDE</sequence>
<protein>
    <recommendedName>
        <fullName evidence="1">Guanylate kinase</fullName>
        <ecNumber evidence="1">2.7.4.8</ecNumber>
    </recommendedName>
    <alternativeName>
        <fullName evidence="1">GMP kinase</fullName>
    </alternativeName>
</protein>
<reference key="1">
    <citation type="journal article" date="2004" name="Nucleic Acids Res.">
        <title>Genome sequence of Symbiobacterium thermophilum, an uncultivable bacterium that depends on microbial commensalism.</title>
        <authorList>
            <person name="Ueda K."/>
            <person name="Yamashita A."/>
            <person name="Ishikawa J."/>
            <person name="Shimada M."/>
            <person name="Watsuji T."/>
            <person name="Morimura K."/>
            <person name="Ikeda H."/>
            <person name="Hattori M."/>
            <person name="Beppu T."/>
        </authorList>
    </citation>
    <scope>NUCLEOTIDE SEQUENCE [LARGE SCALE GENOMIC DNA]</scope>
    <source>
        <strain>DSM 24528 / JCM 14929 / IAM 14863 / T</strain>
    </source>
</reference>
<accession>Q67PR9</accession>
<evidence type="ECO:0000255" key="1">
    <source>
        <dbReference type="HAMAP-Rule" id="MF_00328"/>
    </source>
</evidence>
<proteinExistence type="inferred from homology"/>
<gene>
    <name evidence="1" type="primary">gmk</name>
    <name type="ordered locus">STH1339</name>
</gene>